<keyword id="KW-1003">Cell membrane</keyword>
<keyword id="KW-1015">Disulfide bond</keyword>
<keyword id="KW-0297">G-protein coupled receptor</keyword>
<keyword id="KW-0325">Glycoprotein</keyword>
<keyword id="KW-0472">Membrane</keyword>
<keyword id="KW-1267">Proteomics identification</keyword>
<keyword id="KW-0675">Receptor</keyword>
<keyword id="KW-1185">Reference proteome</keyword>
<keyword id="KW-0807">Transducer</keyword>
<keyword id="KW-0812">Transmembrane</keyword>
<keyword id="KW-1133">Transmembrane helix</keyword>
<proteinExistence type="evidence at protein level"/>
<evidence type="ECO:0000250" key="1">
    <source>
        <dbReference type="UniProtKB" id="P70585"/>
    </source>
</evidence>
<evidence type="ECO:0000250" key="2">
    <source>
        <dbReference type="UniProtKB" id="Q61121"/>
    </source>
</evidence>
<evidence type="ECO:0000255" key="3"/>
<evidence type="ECO:0000255" key="4">
    <source>
        <dbReference type="PROSITE-ProRule" id="PRU00521"/>
    </source>
</evidence>
<evidence type="ECO:0000269" key="5">
    <source>
    </source>
</evidence>
<evidence type="ECO:0000269" key="6">
    <source>
    </source>
</evidence>
<evidence type="ECO:0000269" key="7">
    <source>
    </source>
</evidence>
<evidence type="ECO:0000269" key="8">
    <source ref="2"/>
</evidence>
<name>GPR19_HUMAN</name>
<gene>
    <name type="primary">GPR19</name>
</gene>
<comment type="function">
    <text evidence="1 2 5">G-protein coupled receptor that plays a role in the regulation of circadian rhythms and energy metabolism. Participates in maintaining proper circadian gene expression in the suprachiasmatic nucleus (SCN), the locus of the master circadian clock in the brain (By similarity). May function as a coordinator of aging-associated metabolic dysfunction, stress response, DNA integrity management, and eventual senescence (PubMed:37239845). Upon binding to adropin, modulates mitochondrial energy metabolism via the p44/42-PDK4 signaling pathway, influencing pyruvate dehydrogenase activity (By similarity).</text>
</comment>
<comment type="subcellular location">
    <subcellularLocation>
        <location evidence="6">Cell membrane</location>
        <topology>Multi-pass membrane protein</topology>
    </subcellularLocation>
</comment>
<comment type="tissue specificity">
    <text>Abundant expression in the brain.</text>
</comment>
<comment type="similarity">
    <text evidence="4">Belongs to the G-protein coupled receptor 1 family.</text>
</comment>
<accession>Q15760</accession>
<protein>
    <recommendedName>
        <fullName>Probable G-protein coupled receptor 19</fullName>
    </recommendedName>
    <alternativeName>
        <fullName>GPR-NGA</fullName>
    </alternativeName>
</protein>
<organism>
    <name type="scientific">Homo sapiens</name>
    <name type="common">Human</name>
    <dbReference type="NCBI Taxonomy" id="9606"/>
    <lineage>
        <taxon>Eukaryota</taxon>
        <taxon>Metazoa</taxon>
        <taxon>Chordata</taxon>
        <taxon>Craniata</taxon>
        <taxon>Vertebrata</taxon>
        <taxon>Euteleostomi</taxon>
        <taxon>Mammalia</taxon>
        <taxon>Eutheria</taxon>
        <taxon>Euarchontoglires</taxon>
        <taxon>Primates</taxon>
        <taxon>Haplorrhini</taxon>
        <taxon>Catarrhini</taxon>
        <taxon>Hominidae</taxon>
        <taxon>Homo</taxon>
    </lineage>
</organism>
<sequence length="415" mass="47687">MVFAHRMDNSKPHLIIPTLLVPLQNRSCTETATPLPSQYLMELSEEHSWMSNQTDLHYVLKPGEVATASIFFGILWLFSIFGNSLVCLVIHRSRRTQSTTNYFVVSMACADLLISVASTPFVLLQFTTGRWTLGSATCKVVRYFQYLTPGVQIYVLLSICIDRFYTIVYPLSFKVSREKAKKMIAASWVFDAGFVTPVLFFYGSNWDSHCNYFLPSSWEGTAYTVIHFLVGFVIPSVLIILFYQKVIKYIWRIGTDGRTVRRTMNIVPRTKVKTIKMFLILNLLFLLSWLPFHVAQLWHPHEQDYKKSSLVFTAITWISFSSSASKPTLYSIYNANFRRGMKETFCMSSMKCYRSNAYTITTSSRMAKKNYVGISEIPSMAKTITKDSIYDSFDREAKEKKLAWPINSNPPNTFV</sequence>
<feature type="chain" id="PRO_0000069538" description="Probable G-protein coupled receptor 19">
    <location>
        <begin position="1"/>
        <end position="415"/>
    </location>
</feature>
<feature type="topological domain" description="Extracellular" evidence="3">
    <location>
        <begin position="1"/>
        <end position="69"/>
    </location>
</feature>
<feature type="transmembrane region" description="Helical; Name=1" evidence="3">
    <location>
        <begin position="70"/>
        <end position="90"/>
    </location>
</feature>
<feature type="topological domain" description="Cytoplasmic" evidence="3">
    <location>
        <begin position="91"/>
        <end position="102"/>
    </location>
</feature>
<feature type="transmembrane region" description="Helical; Name=2" evidence="3">
    <location>
        <begin position="103"/>
        <end position="123"/>
    </location>
</feature>
<feature type="topological domain" description="Extracellular" evidence="3">
    <location>
        <begin position="124"/>
        <end position="143"/>
    </location>
</feature>
<feature type="transmembrane region" description="Helical; Name=3" evidence="3">
    <location>
        <begin position="144"/>
        <end position="161"/>
    </location>
</feature>
<feature type="topological domain" description="Cytoplasmic" evidence="3">
    <location>
        <begin position="162"/>
        <end position="182"/>
    </location>
</feature>
<feature type="transmembrane region" description="Helical; Name=4" evidence="3">
    <location>
        <begin position="183"/>
        <end position="203"/>
    </location>
</feature>
<feature type="topological domain" description="Extracellular" evidence="3">
    <location>
        <begin position="204"/>
        <end position="221"/>
    </location>
</feature>
<feature type="transmembrane region" description="Helical; Name=5" evidence="3">
    <location>
        <begin position="222"/>
        <end position="242"/>
    </location>
</feature>
<feature type="topological domain" description="Cytoplasmic" evidence="3">
    <location>
        <begin position="243"/>
        <end position="277"/>
    </location>
</feature>
<feature type="transmembrane region" description="Helical; Name=6" evidence="3">
    <location>
        <begin position="278"/>
        <end position="298"/>
    </location>
</feature>
<feature type="topological domain" description="Extracellular" evidence="3">
    <location>
        <begin position="299"/>
        <end position="309"/>
    </location>
</feature>
<feature type="transmembrane region" description="Helical; Name=7" evidence="3">
    <location>
        <begin position="310"/>
        <end position="325"/>
    </location>
</feature>
<feature type="topological domain" description="Cytoplasmic" evidence="3">
    <location>
        <begin position="326"/>
        <end position="415"/>
    </location>
</feature>
<feature type="glycosylation site" description="N-linked (GlcNAc...) asparagine" evidence="3">
    <location>
        <position position="25"/>
    </location>
</feature>
<feature type="glycosylation site" description="N-linked (GlcNAc...) asparagine" evidence="3">
    <location>
        <position position="52"/>
    </location>
</feature>
<feature type="disulfide bond" evidence="4">
    <location>
        <begin position="138"/>
        <end position="210"/>
    </location>
</feature>
<feature type="sequence variant" id="VAR_024256" description="In dbSNP:rs4763862." evidence="7 8">
    <original>V</original>
    <variation>I</variation>
    <location>
        <position position="189"/>
    </location>
</feature>
<reference key="1">
    <citation type="journal article" date="1996" name="FEBS Lett.">
        <title>A novel gene codes for a putative G protein-coupled receptor with an abundant expression in brain.</title>
        <authorList>
            <person name="O'Dowd B.F."/>
            <person name="Nguyen T."/>
            <person name="Lynch K.R."/>
            <person name="Kolakowski L.F. Jr."/>
            <person name="Thompson M."/>
            <person name="Cheng R."/>
            <person name="Marchese A."/>
            <person name="Ng G.Y.K."/>
            <person name="Heng H.H.Q."/>
            <person name="George S.R."/>
        </authorList>
    </citation>
    <scope>NUCLEOTIDE SEQUENCE [GENOMIC DNA]</scope>
    <scope>VARIANT ILE-189</scope>
</reference>
<reference key="2">
    <citation type="submission" date="1996-05" db="EMBL/GenBank/DDBJ databases">
        <title>A G protein-coupled receptor expressed in NG108-15 and AtT-20 cells.</title>
        <authorList>
            <person name="Bonner T.I."/>
            <person name="Matsuda L.A."/>
        </authorList>
    </citation>
    <scope>NUCLEOTIDE SEQUENCE [GENOMIC DNA]</scope>
    <scope>VARIANT ILE-189</scope>
</reference>
<reference key="3">
    <citation type="journal article" date="2006" name="Nature">
        <title>The finished DNA sequence of human chromosome 12.</title>
        <authorList>
            <person name="Scherer S.E."/>
            <person name="Muzny D.M."/>
            <person name="Buhay C.J."/>
            <person name="Chen R."/>
            <person name="Cree A."/>
            <person name="Ding Y."/>
            <person name="Dugan-Rocha S."/>
            <person name="Gill R."/>
            <person name="Gunaratne P."/>
            <person name="Harris R.A."/>
            <person name="Hawes A.C."/>
            <person name="Hernandez J."/>
            <person name="Hodgson A.V."/>
            <person name="Hume J."/>
            <person name="Jackson A."/>
            <person name="Khan Z.M."/>
            <person name="Kovar-Smith C."/>
            <person name="Lewis L.R."/>
            <person name="Lozado R.J."/>
            <person name="Metzker M.L."/>
            <person name="Milosavljevic A."/>
            <person name="Miner G.R."/>
            <person name="Montgomery K.T."/>
            <person name="Morgan M.B."/>
            <person name="Nazareth L.V."/>
            <person name="Scott G."/>
            <person name="Sodergren E."/>
            <person name="Song X.-Z."/>
            <person name="Steffen D."/>
            <person name="Lovering R.C."/>
            <person name="Wheeler D.A."/>
            <person name="Worley K.C."/>
            <person name="Yuan Y."/>
            <person name="Zhang Z."/>
            <person name="Adams C.Q."/>
            <person name="Ansari-Lari M.A."/>
            <person name="Ayele M."/>
            <person name="Brown M.J."/>
            <person name="Chen G."/>
            <person name="Chen Z."/>
            <person name="Clerc-Blankenburg K.P."/>
            <person name="Davis C."/>
            <person name="Delgado O."/>
            <person name="Dinh H.H."/>
            <person name="Draper H."/>
            <person name="Gonzalez-Garay M.L."/>
            <person name="Havlak P."/>
            <person name="Jackson L.R."/>
            <person name="Jacob L.S."/>
            <person name="Kelly S.H."/>
            <person name="Li L."/>
            <person name="Li Z."/>
            <person name="Liu J."/>
            <person name="Liu W."/>
            <person name="Lu J."/>
            <person name="Maheshwari M."/>
            <person name="Nguyen B.-V."/>
            <person name="Okwuonu G.O."/>
            <person name="Pasternak S."/>
            <person name="Perez L.M."/>
            <person name="Plopper F.J.H."/>
            <person name="Santibanez J."/>
            <person name="Shen H."/>
            <person name="Tabor P.E."/>
            <person name="Verduzco D."/>
            <person name="Waldron L."/>
            <person name="Wang Q."/>
            <person name="Williams G.A."/>
            <person name="Zhang J."/>
            <person name="Zhou J."/>
            <person name="Allen C.C."/>
            <person name="Amin A.G."/>
            <person name="Anyalebechi V."/>
            <person name="Bailey M."/>
            <person name="Barbaria J.A."/>
            <person name="Bimage K.E."/>
            <person name="Bryant N.P."/>
            <person name="Burch P.E."/>
            <person name="Burkett C.E."/>
            <person name="Burrell K.L."/>
            <person name="Calderon E."/>
            <person name="Cardenas V."/>
            <person name="Carter K."/>
            <person name="Casias K."/>
            <person name="Cavazos I."/>
            <person name="Cavazos S.R."/>
            <person name="Ceasar H."/>
            <person name="Chacko J."/>
            <person name="Chan S.N."/>
            <person name="Chavez D."/>
            <person name="Christopoulos C."/>
            <person name="Chu J."/>
            <person name="Cockrell R."/>
            <person name="Cox C.D."/>
            <person name="Dang M."/>
            <person name="Dathorne S.R."/>
            <person name="David R."/>
            <person name="Davis C.M."/>
            <person name="Davy-Carroll L."/>
            <person name="Deshazo D.R."/>
            <person name="Donlin J.E."/>
            <person name="D'Souza L."/>
            <person name="Eaves K.A."/>
            <person name="Egan A."/>
            <person name="Emery-Cohen A.J."/>
            <person name="Escotto M."/>
            <person name="Flagg N."/>
            <person name="Forbes L.D."/>
            <person name="Gabisi A.M."/>
            <person name="Garza M."/>
            <person name="Hamilton C."/>
            <person name="Henderson N."/>
            <person name="Hernandez O."/>
            <person name="Hines S."/>
            <person name="Hogues M.E."/>
            <person name="Huang M."/>
            <person name="Idlebird D.G."/>
            <person name="Johnson R."/>
            <person name="Jolivet A."/>
            <person name="Jones S."/>
            <person name="Kagan R."/>
            <person name="King L.M."/>
            <person name="Leal B."/>
            <person name="Lebow H."/>
            <person name="Lee S."/>
            <person name="LeVan J.M."/>
            <person name="Lewis L.C."/>
            <person name="London P."/>
            <person name="Lorensuhewa L.M."/>
            <person name="Loulseged H."/>
            <person name="Lovett D.A."/>
            <person name="Lucier A."/>
            <person name="Lucier R.L."/>
            <person name="Ma J."/>
            <person name="Madu R.C."/>
            <person name="Mapua P."/>
            <person name="Martindale A.D."/>
            <person name="Martinez E."/>
            <person name="Massey E."/>
            <person name="Mawhiney S."/>
            <person name="Meador M.G."/>
            <person name="Mendez S."/>
            <person name="Mercado C."/>
            <person name="Mercado I.C."/>
            <person name="Merritt C.E."/>
            <person name="Miner Z.L."/>
            <person name="Minja E."/>
            <person name="Mitchell T."/>
            <person name="Mohabbat F."/>
            <person name="Mohabbat K."/>
            <person name="Montgomery B."/>
            <person name="Moore N."/>
            <person name="Morris S."/>
            <person name="Munidasa M."/>
            <person name="Ngo R.N."/>
            <person name="Nguyen N.B."/>
            <person name="Nickerson E."/>
            <person name="Nwaokelemeh O.O."/>
            <person name="Nwokenkwo S."/>
            <person name="Obregon M."/>
            <person name="Oguh M."/>
            <person name="Oragunye N."/>
            <person name="Oviedo R.J."/>
            <person name="Parish B.J."/>
            <person name="Parker D.N."/>
            <person name="Parrish J."/>
            <person name="Parks K.L."/>
            <person name="Paul H.A."/>
            <person name="Payton B.A."/>
            <person name="Perez A."/>
            <person name="Perrin W."/>
            <person name="Pickens A."/>
            <person name="Primus E.L."/>
            <person name="Pu L.-L."/>
            <person name="Puazo M."/>
            <person name="Quiles M.M."/>
            <person name="Quiroz J.B."/>
            <person name="Rabata D."/>
            <person name="Reeves K."/>
            <person name="Ruiz S.J."/>
            <person name="Shao H."/>
            <person name="Sisson I."/>
            <person name="Sonaike T."/>
            <person name="Sorelle R.P."/>
            <person name="Sutton A.E."/>
            <person name="Svatek A.F."/>
            <person name="Svetz L.A."/>
            <person name="Tamerisa K.S."/>
            <person name="Taylor T.R."/>
            <person name="Teague B."/>
            <person name="Thomas N."/>
            <person name="Thorn R.D."/>
            <person name="Trejos Z.Y."/>
            <person name="Trevino B.K."/>
            <person name="Ukegbu O.N."/>
            <person name="Urban J.B."/>
            <person name="Vasquez L.I."/>
            <person name="Vera V.A."/>
            <person name="Villasana D.M."/>
            <person name="Wang L."/>
            <person name="Ward-Moore S."/>
            <person name="Warren J.T."/>
            <person name="Wei X."/>
            <person name="White F."/>
            <person name="Williamson A.L."/>
            <person name="Wleczyk R."/>
            <person name="Wooden H.S."/>
            <person name="Wooden S.H."/>
            <person name="Yen J."/>
            <person name="Yoon L."/>
            <person name="Yoon V."/>
            <person name="Zorrilla S.E."/>
            <person name="Nelson D."/>
            <person name="Kucherlapati R."/>
            <person name="Weinstock G."/>
            <person name="Gibbs R.A."/>
        </authorList>
    </citation>
    <scope>NUCLEOTIDE SEQUENCE [LARGE SCALE GENOMIC DNA]</scope>
</reference>
<reference key="4">
    <citation type="journal article" date="2023" name="Sci. Rep.">
        <title>Expression of G protein-coupled receptor GPR19 in normal and neoplastic human tissues.</title>
        <authorList>
            <person name="Gerlach L."/>
            <person name="Beyer A.L."/>
            <person name="Kaemmerer D."/>
            <person name="Saenger J."/>
            <person name="Evert K."/>
            <person name="Schulz S."/>
            <person name="Lupp A."/>
        </authorList>
    </citation>
    <scope>SUBCELLULAR LOCATION</scope>
    <scope>TISSUE SPECIFICITY</scope>
</reference>
<reference key="5">
    <citation type="journal article" date="2023" name="Int. J. Mol. Sci.">
        <title>GPR19 Coordinates Multiple Molecular Aspects of Stress Responses Associated with the Aging Process.</title>
        <authorList>
            <person name="Maudsley S."/>
            <person name="Schrauwen C."/>
            <person name="Harputluoglu I."/>
            <person name="Walter D."/>
            <person name="Leysen H."/>
            <person name="McDonald P."/>
        </authorList>
    </citation>
    <scope>FUNCTION</scope>
</reference>
<dbReference type="EMBL" id="U64871">
    <property type="protein sequence ID" value="AAB49751.1"/>
    <property type="molecule type" value="Genomic_DNA"/>
</dbReference>
<dbReference type="EMBL" id="U55312">
    <property type="protein sequence ID" value="AAB00316.1"/>
    <property type="molecule type" value="Genomic_DNA"/>
</dbReference>
<dbReference type="EMBL" id="AC008115">
    <property type="status" value="NOT_ANNOTATED_CDS"/>
    <property type="molecule type" value="Genomic_DNA"/>
</dbReference>
<dbReference type="CCDS" id="CCDS8652.1"/>
<dbReference type="PIR" id="S74237">
    <property type="entry name" value="S74237"/>
</dbReference>
<dbReference type="RefSeq" id="NP_006134.2">
    <property type="nucleotide sequence ID" value="NM_006143.3"/>
</dbReference>
<dbReference type="RefSeq" id="XP_011518927.1">
    <property type="nucleotide sequence ID" value="XM_011520625.2"/>
</dbReference>
<dbReference type="RefSeq" id="XP_016874705.1">
    <property type="nucleotide sequence ID" value="XM_017019216.1"/>
</dbReference>
<dbReference type="RefSeq" id="XP_047284698.1">
    <property type="nucleotide sequence ID" value="XM_047428742.1"/>
</dbReference>
<dbReference type="SMR" id="Q15760"/>
<dbReference type="BioGRID" id="109101">
    <property type="interactions" value="2"/>
</dbReference>
<dbReference type="FunCoup" id="Q15760">
    <property type="interactions" value="504"/>
</dbReference>
<dbReference type="STRING" id="9606.ENSP00000498976"/>
<dbReference type="ChEMBL" id="CHEMBL4523870"/>
<dbReference type="GuidetoPHARMACOLOGY" id="90"/>
<dbReference type="GlyCosmos" id="Q15760">
    <property type="glycosylation" value="2 sites, No reported glycans"/>
</dbReference>
<dbReference type="GlyGen" id="Q15760">
    <property type="glycosylation" value="2 sites"/>
</dbReference>
<dbReference type="iPTMnet" id="Q15760"/>
<dbReference type="PhosphoSitePlus" id="Q15760"/>
<dbReference type="BioMuta" id="GPR19"/>
<dbReference type="DMDM" id="322510031"/>
<dbReference type="MassIVE" id="Q15760"/>
<dbReference type="PaxDb" id="9606-ENSP00000441832"/>
<dbReference type="PeptideAtlas" id="Q15760"/>
<dbReference type="ProteomicsDB" id="60746"/>
<dbReference type="Antibodypedia" id="2961">
    <property type="antibodies" value="150 antibodies from 30 providers"/>
</dbReference>
<dbReference type="DNASU" id="2842"/>
<dbReference type="Ensembl" id="ENST00000332427.6">
    <property type="protein sequence ID" value="ENSP00000333744.2"/>
    <property type="gene ID" value="ENSG00000183150.8"/>
</dbReference>
<dbReference type="Ensembl" id="ENST00000540510.1">
    <property type="protein sequence ID" value="ENSP00000441832.1"/>
    <property type="gene ID" value="ENSG00000183150.8"/>
</dbReference>
<dbReference type="Ensembl" id="ENST00000651487.1">
    <property type="protein sequence ID" value="ENSP00000498976.1"/>
    <property type="gene ID" value="ENSG00000183150.8"/>
</dbReference>
<dbReference type="GeneID" id="2842"/>
<dbReference type="KEGG" id="hsa:2842"/>
<dbReference type="MANE-Select" id="ENST00000651487.1">
    <property type="protein sequence ID" value="ENSP00000498976.1"/>
    <property type="RefSeq nucleotide sequence ID" value="NM_006143.3"/>
    <property type="RefSeq protein sequence ID" value="NP_006134.2"/>
</dbReference>
<dbReference type="UCSC" id="uc001raq.2">
    <property type="organism name" value="human"/>
</dbReference>
<dbReference type="AGR" id="HGNC:4473"/>
<dbReference type="CTD" id="2842"/>
<dbReference type="DisGeNET" id="2842"/>
<dbReference type="GeneCards" id="GPR19"/>
<dbReference type="HGNC" id="HGNC:4473">
    <property type="gene designation" value="GPR19"/>
</dbReference>
<dbReference type="HPA" id="ENSG00000183150">
    <property type="expression patterns" value="Tissue enhanced (brain, pituitary gland, testis)"/>
</dbReference>
<dbReference type="MIM" id="602927">
    <property type="type" value="gene"/>
</dbReference>
<dbReference type="neXtProt" id="NX_Q15760"/>
<dbReference type="OpenTargets" id="ENSG00000183150"/>
<dbReference type="PharmGKB" id="PA28861"/>
<dbReference type="VEuPathDB" id="HostDB:ENSG00000183150"/>
<dbReference type="eggNOG" id="KOG3656">
    <property type="taxonomic scope" value="Eukaryota"/>
</dbReference>
<dbReference type="GeneTree" id="ENSGT00940000160365"/>
<dbReference type="HOGENOM" id="CLU_009579_20_0_1"/>
<dbReference type="InParanoid" id="Q15760"/>
<dbReference type="OMA" id="QLWHPRE"/>
<dbReference type="OrthoDB" id="5965754at2759"/>
<dbReference type="PAN-GO" id="Q15760">
    <property type="GO annotations" value="3 GO annotations based on evolutionary models"/>
</dbReference>
<dbReference type="PhylomeDB" id="Q15760"/>
<dbReference type="TreeFam" id="TF331630"/>
<dbReference type="PathwayCommons" id="Q15760"/>
<dbReference type="SignaLink" id="Q15760"/>
<dbReference type="BioGRID-ORCS" id="2842">
    <property type="hits" value="7 hits in 1140 CRISPR screens"/>
</dbReference>
<dbReference type="ChiTaRS" id="GPR19">
    <property type="organism name" value="human"/>
</dbReference>
<dbReference type="GeneWiki" id="GPR19"/>
<dbReference type="GenomeRNAi" id="2842"/>
<dbReference type="Pharos" id="Q15760">
    <property type="development level" value="Tdark"/>
</dbReference>
<dbReference type="PRO" id="PR:Q15760"/>
<dbReference type="Proteomes" id="UP000005640">
    <property type="component" value="Chromosome 12"/>
</dbReference>
<dbReference type="RNAct" id="Q15760">
    <property type="molecule type" value="protein"/>
</dbReference>
<dbReference type="Bgee" id="ENSG00000183150">
    <property type="expression patterns" value="Expressed in male germ line stem cell (sensu Vertebrata) in testis and 118 other cell types or tissues"/>
</dbReference>
<dbReference type="ExpressionAtlas" id="Q15760">
    <property type="expression patterns" value="baseline and differential"/>
</dbReference>
<dbReference type="GO" id="GO:0005929">
    <property type="term" value="C:cilium"/>
    <property type="evidence" value="ECO:0000314"/>
    <property type="project" value="MGI"/>
</dbReference>
<dbReference type="GO" id="GO:0043005">
    <property type="term" value="C:neuron projection"/>
    <property type="evidence" value="ECO:0007669"/>
    <property type="project" value="Ensembl"/>
</dbReference>
<dbReference type="GO" id="GO:0005886">
    <property type="term" value="C:plasma membrane"/>
    <property type="evidence" value="ECO:0000318"/>
    <property type="project" value="GO_Central"/>
</dbReference>
<dbReference type="GO" id="GO:0004930">
    <property type="term" value="F:G protein-coupled receptor activity"/>
    <property type="evidence" value="ECO:0000318"/>
    <property type="project" value="GO_Central"/>
</dbReference>
<dbReference type="GO" id="GO:0007186">
    <property type="term" value="P:G protein-coupled receptor signaling pathway"/>
    <property type="evidence" value="ECO:0000318"/>
    <property type="project" value="GO_Central"/>
</dbReference>
<dbReference type="CDD" id="cd15008">
    <property type="entry name" value="7tmA_GPR19"/>
    <property type="match status" value="1"/>
</dbReference>
<dbReference type="FunFam" id="1.20.1070.10:FF:000165">
    <property type="entry name" value="Probable G-protein coupled receptor 19"/>
    <property type="match status" value="1"/>
</dbReference>
<dbReference type="Gene3D" id="1.20.1070.10">
    <property type="entry name" value="Rhodopsin 7-helix transmembrane proteins"/>
    <property type="match status" value="1"/>
</dbReference>
<dbReference type="InterPro" id="IPR000276">
    <property type="entry name" value="GPCR_Rhodpsn"/>
</dbReference>
<dbReference type="InterPro" id="IPR017452">
    <property type="entry name" value="GPCR_Rhodpsn_7TM"/>
</dbReference>
<dbReference type="InterPro" id="IPR047829">
    <property type="entry name" value="GPR19_7tmA"/>
</dbReference>
<dbReference type="PANTHER" id="PTHR45695:SF9">
    <property type="entry name" value="LEUCOKININ RECEPTOR"/>
    <property type="match status" value="1"/>
</dbReference>
<dbReference type="PANTHER" id="PTHR45695">
    <property type="entry name" value="LEUCOKININ RECEPTOR-RELATED"/>
    <property type="match status" value="1"/>
</dbReference>
<dbReference type="Pfam" id="PF00001">
    <property type="entry name" value="7tm_1"/>
    <property type="match status" value="1"/>
</dbReference>
<dbReference type="PRINTS" id="PR00237">
    <property type="entry name" value="GPCRRHODOPSN"/>
</dbReference>
<dbReference type="SMART" id="SM01381">
    <property type="entry name" value="7TM_GPCR_Srsx"/>
    <property type="match status" value="1"/>
</dbReference>
<dbReference type="SUPFAM" id="SSF81321">
    <property type="entry name" value="Family A G protein-coupled receptor-like"/>
    <property type="match status" value="1"/>
</dbReference>
<dbReference type="PROSITE" id="PS50262">
    <property type="entry name" value="G_PROTEIN_RECEP_F1_2"/>
    <property type="match status" value="1"/>
</dbReference>